<gene>
    <name evidence="1" type="primary">leuC</name>
    <name type="ordered locus">aq_940</name>
</gene>
<protein>
    <recommendedName>
        <fullName evidence="1">3-isopropylmalate dehydratase large subunit</fullName>
        <ecNumber evidence="1">4.2.1.33</ecNumber>
    </recommendedName>
    <alternativeName>
        <fullName evidence="1">Alpha-IPM isomerase</fullName>
        <shortName evidence="1">IPMI</shortName>
    </alternativeName>
    <alternativeName>
        <fullName evidence="1">Isopropylmalate isomerase</fullName>
    </alternativeName>
</protein>
<keyword id="KW-0004">4Fe-4S</keyword>
<keyword id="KW-0028">Amino-acid biosynthesis</keyword>
<keyword id="KW-0100">Branched-chain amino acid biosynthesis</keyword>
<keyword id="KW-0408">Iron</keyword>
<keyword id="KW-0411">Iron-sulfur</keyword>
<keyword id="KW-0432">Leucine biosynthesis</keyword>
<keyword id="KW-0456">Lyase</keyword>
<keyword id="KW-0479">Metal-binding</keyword>
<keyword id="KW-1185">Reference proteome</keyword>
<dbReference type="EC" id="4.2.1.33" evidence="1"/>
<dbReference type="EMBL" id="AE000657">
    <property type="protein sequence ID" value="AAC07028.1"/>
    <property type="molecule type" value="Genomic_DNA"/>
</dbReference>
<dbReference type="PIR" id="C70381">
    <property type="entry name" value="C70381"/>
</dbReference>
<dbReference type="RefSeq" id="NP_213641.1">
    <property type="nucleotide sequence ID" value="NC_000918.1"/>
</dbReference>
<dbReference type="RefSeq" id="WP_010880579.1">
    <property type="nucleotide sequence ID" value="NC_000918.1"/>
</dbReference>
<dbReference type="SMR" id="O67078"/>
<dbReference type="FunCoup" id="O67078">
    <property type="interactions" value="432"/>
</dbReference>
<dbReference type="STRING" id="224324.aq_940"/>
<dbReference type="EnsemblBacteria" id="AAC07028">
    <property type="protein sequence ID" value="AAC07028"/>
    <property type="gene ID" value="aq_940"/>
</dbReference>
<dbReference type="KEGG" id="aae:aq_940"/>
<dbReference type="PATRIC" id="fig|224324.8.peg.735"/>
<dbReference type="eggNOG" id="COG0065">
    <property type="taxonomic scope" value="Bacteria"/>
</dbReference>
<dbReference type="HOGENOM" id="CLU_006714_3_4_0"/>
<dbReference type="InParanoid" id="O67078"/>
<dbReference type="OrthoDB" id="9764318at2"/>
<dbReference type="UniPathway" id="UPA00048">
    <property type="reaction ID" value="UER00071"/>
</dbReference>
<dbReference type="Proteomes" id="UP000000798">
    <property type="component" value="Chromosome"/>
</dbReference>
<dbReference type="GO" id="GO:0003861">
    <property type="term" value="F:3-isopropylmalate dehydratase activity"/>
    <property type="evidence" value="ECO:0007669"/>
    <property type="project" value="UniProtKB-UniRule"/>
</dbReference>
<dbReference type="GO" id="GO:0051539">
    <property type="term" value="F:4 iron, 4 sulfur cluster binding"/>
    <property type="evidence" value="ECO:0007669"/>
    <property type="project" value="UniProtKB-KW"/>
</dbReference>
<dbReference type="GO" id="GO:0046872">
    <property type="term" value="F:metal ion binding"/>
    <property type="evidence" value="ECO:0007669"/>
    <property type="project" value="UniProtKB-KW"/>
</dbReference>
<dbReference type="GO" id="GO:0009098">
    <property type="term" value="P:L-leucine biosynthetic process"/>
    <property type="evidence" value="ECO:0007669"/>
    <property type="project" value="UniProtKB-UniRule"/>
</dbReference>
<dbReference type="CDD" id="cd01583">
    <property type="entry name" value="IPMI"/>
    <property type="match status" value="1"/>
</dbReference>
<dbReference type="Gene3D" id="3.30.499.10">
    <property type="entry name" value="Aconitase, domain 3"/>
    <property type="match status" value="2"/>
</dbReference>
<dbReference type="HAMAP" id="MF_01027">
    <property type="entry name" value="LeuC_type2"/>
    <property type="match status" value="1"/>
</dbReference>
<dbReference type="InterPro" id="IPR015931">
    <property type="entry name" value="Acnase/IPM_dHydase_lsu_aba_1/3"/>
</dbReference>
<dbReference type="InterPro" id="IPR001030">
    <property type="entry name" value="Acoase/IPM_deHydtase_lsu_aba"/>
</dbReference>
<dbReference type="InterPro" id="IPR018136">
    <property type="entry name" value="Aconitase_4Fe-4S_BS"/>
</dbReference>
<dbReference type="InterPro" id="IPR036008">
    <property type="entry name" value="Aconitase_4Fe-4S_dom"/>
</dbReference>
<dbReference type="InterPro" id="IPR011826">
    <property type="entry name" value="HAcnase/IPMdehydase_lsu_prok"/>
</dbReference>
<dbReference type="InterPro" id="IPR006251">
    <property type="entry name" value="Homoacnase/IPMdehydase_lsu"/>
</dbReference>
<dbReference type="InterPro" id="IPR050067">
    <property type="entry name" value="IPM_dehydratase_rel_enz"/>
</dbReference>
<dbReference type="InterPro" id="IPR033941">
    <property type="entry name" value="IPMI_cat"/>
</dbReference>
<dbReference type="InterPro" id="IPR011823">
    <property type="entry name" value="IsopropMal_deHydtase_lsu_bac"/>
</dbReference>
<dbReference type="NCBIfam" id="TIGR01343">
    <property type="entry name" value="hacA_fam"/>
    <property type="match status" value="1"/>
</dbReference>
<dbReference type="NCBIfam" id="TIGR02086">
    <property type="entry name" value="IPMI_arch"/>
    <property type="match status" value="1"/>
</dbReference>
<dbReference type="NCBIfam" id="TIGR02083">
    <property type="entry name" value="LEU2"/>
    <property type="match status" value="1"/>
</dbReference>
<dbReference type="NCBIfam" id="NF001614">
    <property type="entry name" value="PRK00402.1"/>
    <property type="match status" value="1"/>
</dbReference>
<dbReference type="PANTHER" id="PTHR43822:SF16">
    <property type="entry name" value="3-ISOPROPYLMALATE DEHYDRATASE LARGE SUBUNIT 2"/>
    <property type="match status" value="1"/>
</dbReference>
<dbReference type="PANTHER" id="PTHR43822">
    <property type="entry name" value="HOMOACONITASE, MITOCHONDRIAL-RELATED"/>
    <property type="match status" value="1"/>
</dbReference>
<dbReference type="Pfam" id="PF00330">
    <property type="entry name" value="Aconitase"/>
    <property type="match status" value="1"/>
</dbReference>
<dbReference type="PRINTS" id="PR00415">
    <property type="entry name" value="ACONITASE"/>
</dbReference>
<dbReference type="SUPFAM" id="SSF53732">
    <property type="entry name" value="Aconitase iron-sulfur domain"/>
    <property type="match status" value="1"/>
</dbReference>
<dbReference type="PROSITE" id="PS00450">
    <property type="entry name" value="ACONITASE_1"/>
    <property type="match status" value="1"/>
</dbReference>
<dbReference type="PROSITE" id="PS01244">
    <property type="entry name" value="ACONITASE_2"/>
    <property type="match status" value="1"/>
</dbReference>
<reference key="1">
    <citation type="journal article" date="1998" name="Nature">
        <title>The complete genome of the hyperthermophilic bacterium Aquifex aeolicus.</title>
        <authorList>
            <person name="Deckert G."/>
            <person name="Warren P.V."/>
            <person name="Gaasterland T."/>
            <person name="Young W.G."/>
            <person name="Lenox A.L."/>
            <person name="Graham D.E."/>
            <person name="Overbeek R."/>
            <person name="Snead M.A."/>
            <person name="Keller M."/>
            <person name="Aujay M."/>
            <person name="Huber R."/>
            <person name="Feldman R.A."/>
            <person name="Short J.M."/>
            <person name="Olsen G.J."/>
            <person name="Swanson R.V."/>
        </authorList>
    </citation>
    <scope>NUCLEOTIDE SEQUENCE [LARGE SCALE GENOMIC DNA]</scope>
    <source>
        <strain>VF5</strain>
    </source>
</reference>
<accession>O67078</accession>
<comment type="function">
    <text evidence="1">Catalyzes the isomerization between 2-isopropylmalate and 3-isopropylmalate, via the formation of 2-isopropylmaleate.</text>
</comment>
<comment type="catalytic activity">
    <reaction evidence="1">
        <text>(2R,3S)-3-isopropylmalate = (2S)-2-isopropylmalate</text>
        <dbReference type="Rhea" id="RHEA:32287"/>
        <dbReference type="ChEBI" id="CHEBI:1178"/>
        <dbReference type="ChEBI" id="CHEBI:35121"/>
        <dbReference type="EC" id="4.2.1.33"/>
    </reaction>
</comment>
<comment type="cofactor">
    <cofactor evidence="1">
        <name>[4Fe-4S] cluster</name>
        <dbReference type="ChEBI" id="CHEBI:49883"/>
    </cofactor>
    <text evidence="1">Binds 1 [4Fe-4S] cluster per subunit.</text>
</comment>
<comment type="pathway">
    <text evidence="1">Amino-acid biosynthesis; L-leucine biosynthesis; L-leucine from 3-methyl-2-oxobutanoate: step 2/4.</text>
</comment>
<comment type="subunit">
    <text evidence="1">Heterodimer of LeuC and LeuD.</text>
</comment>
<comment type="similarity">
    <text evidence="1">Belongs to the aconitase/IPM isomerase family. LeuC type 2 subfamily.</text>
</comment>
<sequence length="432" mass="47088">MGMTITEKILAEHAGKKEVHPGELITAKIDLAMANDVTAPLAIKILEKYGIDKVFDPERIALVLSHFVPAKDIKSAEQAKIVREFVKKHGIKWFFEEGEGIEHAILPEQGLVVPGDLVVGADSHTCTYGALGAFATGVGSTDIAYAMATGEVWLRVPESMKFIFYGKLKPWVMGKDLILYTIGQIGVDGALYRAMEFDGETIRNLSMEQRFTIANMAIEAGGKSGIISPDEKTIEYVKQRAKRPWKVYQSDPDAEYHSVYEWDASQIEPLVAWPYLPSNVHPVSESTHITIDQAFIGSCTNGRIEDLRVAAKVFEAALKQGKKVHPYVRCIVIPASKAIYKQALKEGLIDIFMEAGCVVSTSTCGPCLGGHMGVLAEGERCISTSNRNFPGRMGHPKSESYLANPAVVAASAIMGRIAHPDEVVKAETLAGV</sequence>
<name>LEUC_AQUAE</name>
<proteinExistence type="inferred from homology"/>
<feature type="chain" id="PRO_0000076854" description="3-isopropylmalate dehydratase large subunit">
    <location>
        <begin position="1"/>
        <end position="432"/>
    </location>
</feature>
<feature type="binding site" evidence="1">
    <location>
        <position position="299"/>
    </location>
    <ligand>
        <name>[4Fe-4S] cluster</name>
        <dbReference type="ChEBI" id="CHEBI:49883"/>
    </ligand>
</feature>
<feature type="binding site" evidence="1">
    <location>
        <position position="364"/>
    </location>
    <ligand>
        <name>[4Fe-4S] cluster</name>
        <dbReference type="ChEBI" id="CHEBI:49883"/>
    </ligand>
</feature>
<feature type="binding site" evidence="1">
    <location>
        <position position="367"/>
    </location>
    <ligand>
        <name>[4Fe-4S] cluster</name>
        <dbReference type="ChEBI" id="CHEBI:49883"/>
    </ligand>
</feature>
<organism>
    <name type="scientific">Aquifex aeolicus (strain VF5)</name>
    <dbReference type="NCBI Taxonomy" id="224324"/>
    <lineage>
        <taxon>Bacteria</taxon>
        <taxon>Pseudomonadati</taxon>
        <taxon>Aquificota</taxon>
        <taxon>Aquificia</taxon>
        <taxon>Aquificales</taxon>
        <taxon>Aquificaceae</taxon>
        <taxon>Aquifex</taxon>
    </lineage>
</organism>
<evidence type="ECO:0000255" key="1">
    <source>
        <dbReference type="HAMAP-Rule" id="MF_01027"/>
    </source>
</evidence>